<sequence length="599" mass="66605">MKNIRNFSIIAHIDHGKSTLSDRIIQICGGLSDREMEAQVLDSMDLERERGITIKAQSVTLDYKAADGETYHLNFIDTPGHVDFSYEVSRSLAACEGALLVVDAGQGVEAQTLANCYTAMEMDLEVVPVLNKIDLPAADPERVAEEIEDIVGIDATDAVRCSAKTGVGVQDVLERLVRDIPPPEGDPEGPLQALIIDSWFDNYLGVVSLVRIKNGTMRKGDKVKVMSTGQVYNADRLGIFTPKQIDRTKLKCGEVGWLVCAIKDIHGAPVGDTLTLARNPAEKALPGFKKVKPQVYAGLFPVSSDDYENFRDALGKLSLNDASLFYEPESSTALGFGFRCGFLGLLHMEIIQERLEREYDLDLITTAPTVVYEVETTAKEIIYVDSPSKLPPLNNIYELREPIAECHMLLPQAYLGNVITLCVEKRGVQTNMVYHGNQVALTYEIPMAEVVLDFFDRLKSTSRGYASLDYNFKRFQASDMVRVDVLINNERVDALALITHRGNSQSRGRELVEKMKELIPRQQFDIAIQAAIGTHIIARSTVKQLRKNVLAKCYGGDISRKKKLLQKQKEGKKRMKQIGNVELPQEAFLAILHVGKDSK</sequence>
<gene>
    <name evidence="1" type="primary">lepA</name>
    <name type="ordered locus">CKO_00213</name>
</gene>
<keyword id="KW-0997">Cell inner membrane</keyword>
<keyword id="KW-1003">Cell membrane</keyword>
<keyword id="KW-0342">GTP-binding</keyword>
<keyword id="KW-0378">Hydrolase</keyword>
<keyword id="KW-0472">Membrane</keyword>
<keyword id="KW-0547">Nucleotide-binding</keyword>
<keyword id="KW-0648">Protein biosynthesis</keyword>
<keyword id="KW-1185">Reference proteome</keyword>
<proteinExistence type="inferred from homology"/>
<dbReference type="EC" id="3.6.5.n1" evidence="1"/>
<dbReference type="EMBL" id="CP000822">
    <property type="protein sequence ID" value="ABV11379.1"/>
    <property type="molecule type" value="Genomic_DNA"/>
</dbReference>
<dbReference type="RefSeq" id="WP_012131212.1">
    <property type="nucleotide sequence ID" value="NC_009792.1"/>
</dbReference>
<dbReference type="SMR" id="A8AD16"/>
<dbReference type="STRING" id="290338.CKO_00213"/>
<dbReference type="GeneID" id="45134503"/>
<dbReference type="KEGG" id="cko:CKO_00213"/>
<dbReference type="HOGENOM" id="CLU_009995_3_3_6"/>
<dbReference type="OrthoDB" id="9804431at2"/>
<dbReference type="Proteomes" id="UP000008148">
    <property type="component" value="Chromosome"/>
</dbReference>
<dbReference type="GO" id="GO:0005886">
    <property type="term" value="C:plasma membrane"/>
    <property type="evidence" value="ECO:0007669"/>
    <property type="project" value="UniProtKB-SubCell"/>
</dbReference>
<dbReference type="GO" id="GO:0005525">
    <property type="term" value="F:GTP binding"/>
    <property type="evidence" value="ECO:0007669"/>
    <property type="project" value="UniProtKB-UniRule"/>
</dbReference>
<dbReference type="GO" id="GO:0003924">
    <property type="term" value="F:GTPase activity"/>
    <property type="evidence" value="ECO:0007669"/>
    <property type="project" value="UniProtKB-UniRule"/>
</dbReference>
<dbReference type="GO" id="GO:0097216">
    <property type="term" value="F:guanosine tetraphosphate binding"/>
    <property type="evidence" value="ECO:0007669"/>
    <property type="project" value="UniProtKB-ARBA"/>
</dbReference>
<dbReference type="GO" id="GO:0043022">
    <property type="term" value="F:ribosome binding"/>
    <property type="evidence" value="ECO:0007669"/>
    <property type="project" value="UniProtKB-UniRule"/>
</dbReference>
<dbReference type="GO" id="GO:0003746">
    <property type="term" value="F:translation elongation factor activity"/>
    <property type="evidence" value="ECO:0007669"/>
    <property type="project" value="UniProtKB-UniRule"/>
</dbReference>
<dbReference type="GO" id="GO:0045727">
    <property type="term" value="P:positive regulation of translation"/>
    <property type="evidence" value="ECO:0007669"/>
    <property type="project" value="UniProtKB-UniRule"/>
</dbReference>
<dbReference type="CDD" id="cd03699">
    <property type="entry name" value="EF4_II"/>
    <property type="match status" value="1"/>
</dbReference>
<dbReference type="CDD" id="cd16260">
    <property type="entry name" value="EF4_III"/>
    <property type="match status" value="1"/>
</dbReference>
<dbReference type="CDD" id="cd01890">
    <property type="entry name" value="LepA"/>
    <property type="match status" value="1"/>
</dbReference>
<dbReference type="CDD" id="cd03709">
    <property type="entry name" value="lepA_C"/>
    <property type="match status" value="1"/>
</dbReference>
<dbReference type="FunFam" id="3.30.70.240:FF:000005">
    <property type="entry name" value="Elongation factor 4"/>
    <property type="match status" value="1"/>
</dbReference>
<dbReference type="FunFam" id="3.40.50.300:FF:000078">
    <property type="entry name" value="Elongation factor 4"/>
    <property type="match status" value="1"/>
</dbReference>
<dbReference type="FunFam" id="2.40.30.10:FF:000015">
    <property type="entry name" value="Translation factor GUF1, mitochondrial"/>
    <property type="match status" value="1"/>
</dbReference>
<dbReference type="FunFam" id="3.30.70.2570:FF:000001">
    <property type="entry name" value="Translation factor GUF1, mitochondrial"/>
    <property type="match status" value="1"/>
</dbReference>
<dbReference type="FunFam" id="3.30.70.870:FF:000004">
    <property type="entry name" value="Translation factor GUF1, mitochondrial"/>
    <property type="match status" value="1"/>
</dbReference>
<dbReference type="Gene3D" id="3.30.70.240">
    <property type="match status" value="1"/>
</dbReference>
<dbReference type="Gene3D" id="3.30.70.2570">
    <property type="entry name" value="Elongation factor 4, C-terminal domain"/>
    <property type="match status" value="1"/>
</dbReference>
<dbReference type="Gene3D" id="3.30.70.870">
    <property type="entry name" value="Elongation Factor G (Translational Gtpase), domain 3"/>
    <property type="match status" value="1"/>
</dbReference>
<dbReference type="Gene3D" id="3.40.50.300">
    <property type="entry name" value="P-loop containing nucleotide triphosphate hydrolases"/>
    <property type="match status" value="1"/>
</dbReference>
<dbReference type="Gene3D" id="2.40.30.10">
    <property type="entry name" value="Translation factors"/>
    <property type="match status" value="1"/>
</dbReference>
<dbReference type="HAMAP" id="MF_00071">
    <property type="entry name" value="LepA"/>
    <property type="match status" value="1"/>
</dbReference>
<dbReference type="InterPro" id="IPR006297">
    <property type="entry name" value="EF-4"/>
</dbReference>
<dbReference type="InterPro" id="IPR035647">
    <property type="entry name" value="EFG_III/V"/>
</dbReference>
<dbReference type="InterPro" id="IPR000640">
    <property type="entry name" value="EFG_V-like"/>
</dbReference>
<dbReference type="InterPro" id="IPR004161">
    <property type="entry name" value="EFTu-like_2"/>
</dbReference>
<dbReference type="InterPro" id="IPR031157">
    <property type="entry name" value="G_TR_CS"/>
</dbReference>
<dbReference type="InterPro" id="IPR038363">
    <property type="entry name" value="LepA_C_sf"/>
</dbReference>
<dbReference type="InterPro" id="IPR013842">
    <property type="entry name" value="LepA_CTD"/>
</dbReference>
<dbReference type="InterPro" id="IPR035654">
    <property type="entry name" value="LepA_IV"/>
</dbReference>
<dbReference type="InterPro" id="IPR027417">
    <property type="entry name" value="P-loop_NTPase"/>
</dbReference>
<dbReference type="InterPro" id="IPR005225">
    <property type="entry name" value="Small_GTP-bd"/>
</dbReference>
<dbReference type="InterPro" id="IPR000795">
    <property type="entry name" value="T_Tr_GTP-bd_dom"/>
</dbReference>
<dbReference type="NCBIfam" id="TIGR01393">
    <property type="entry name" value="lepA"/>
    <property type="match status" value="1"/>
</dbReference>
<dbReference type="NCBIfam" id="TIGR00231">
    <property type="entry name" value="small_GTP"/>
    <property type="match status" value="1"/>
</dbReference>
<dbReference type="PANTHER" id="PTHR43512:SF4">
    <property type="entry name" value="TRANSLATION FACTOR GUF1 HOMOLOG, CHLOROPLASTIC"/>
    <property type="match status" value="1"/>
</dbReference>
<dbReference type="PANTHER" id="PTHR43512">
    <property type="entry name" value="TRANSLATION FACTOR GUF1-RELATED"/>
    <property type="match status" value="1"/>
</dbReference>
<dbReference type="Pfam" id="PF00679">
    <property type="entry name" value="EFG_C"/>
    <property type="match status" value="1"/>
</dbReference>
<dbReference type="Pfam" id="PF00009">
    <property type="entry name" value="GTP_EFTU"/>
    <property type="match status" value="1"/>
</dbReference>
<dbReference type="Pfam" id="PF03144">
    <property type="entry name" value="GTP_EFTU_D2"/>
    <property type="match status" value="1"/>
</dbReference>
<dbReference type="Pfam" id="PF06421">
    <property type="entry name" value="LepA_C"/>
    <property type="match status" value="1"/>
</dbReference>
<dbReference type="PRINTS" id="PR00315">
    <property type="entry name" value="ELONGATNFCT"/>
</dbReference>
<dbReference type="SUPFAM" id="SSF54980">
    <property type="entry name" value="EF-G C-terminal domain-like"/>
    <property type="match status" value="2"/>
</dbReference>
<dbReference type="SUPFAM" id="SSF52540">
    <property type="entry name" value="P-loop containing nucleoside triphosphate hydrolases"/>
    <property type="match status" value="1"/>
</dbReference>
<dbReference type="PROSITE" id="PS00301">
    <property type="entry name" value="G_TR_1"/>
    <property type="match status" value="1"/>
</dbReference>
<dbReference type="PROSITE" id="PS51722">
    <property type="entry name" value="G_TR_2"/>
    <property type="match status" value="1"/>
</dbReference>
<name>LEPA_CITK8</name>
<reference key="1">
    <citation type="submission" date="2007-08" db="EMBL/GenBank/DDBJ databases">
        <authorList>
            <consortium name="The Citrobacter koseri Genome Sequencing Project"/>
            <person name="McClelland M."/>
            <person name="Sanderson E.K."/>
            <person name="Porwollik S."/>
            <person name="Spieth J."/>
            <person name="Clifton W.S."/>
            <person name="Latreille P."/>
            <person name="Courtney L."/>
            <person name="Wang C."/>
            <person name="Pepin K."/>
            <person name="Bhonagiri V."/>
            <person name="Nash W."/>
            <person name="Johnson M."/>
            <person name="Thiruvilangam P."/>
            <person name="Wilson R."/>
        </authorList>
    </citation>
    <scope>NUCLEOTIDE SEQUENCE [LARGE SCALE GENOMIC DNA]</scope>
    <source>
        <strain>ATCC BAA-895 / CDC 4225-83 / SGSC4696</strain>
    </source>
</reference>
<accession>A8AD16</accession>
<protein>
    <recommendedName>
        <fullName evidence="1">Elongation factor 4</fullName>
        <shortName evidence="1">EF-4</shortName>
        <ecNumber evidence="1">3.6.5.n1</ecNumber>
    </recommendedName>
    <alternativeName>
        <fullName evidence="1">Ribosomal back-translocase LepA</fullName>
    </alternativeName>
</protein>
<evidence type="ECO:0000255" key="1">
    <source>
        <dbReference type="HAMAP-Rule" id="MF_00071"/>
    </source>
</evidence>
<organism>
    <name type="scientific">Citrobacter koseri (strain ATCC BAA-895 / CDC 4225-83 / SGSC4696)</name>
    <dbReference type="NCBI Taxonomy" id="290338"/>
    <lineage>
        <taxon>Bacteria</taxon>
        <taxon>Pseudomonadati</taxon>
        <taxon>Pseudomonadota</taxon>
        <taxon>Gammaproteobacteria</taxon>
        <taxon>Enterobacterales</taxon>
        <taxon>Enterobacteriaceae</taxon>
        <taxon>Citrobacter</taxon>
    </lineage>
</organism>
<feature type="chain" id="PRO_1000031986" description="Elongation factor 4">
    <location>
        <begin position="1"/>
        <end position="599"/>
    </location>
</feature>
<feature type="domain" description="tr-type G">
    <location>
        <begin position="2"/>
        <end position="184"/>
    </location>
</feature>
<feature type="binding site" evidence="1">
    <location>
        <begin position="14"/>
        <end position="19"/>
    </location>
    <ligand>
        <name>GTP</name>
        <dbReference type="ChEBI" id="CHEBI:37565"/>
    </ligand>
</feature>
<feature type="binding site" evidence="1">
    <location>
        <begin position="131"/>
        <end position="134"/>
    </location>
    <ligand>
        <name>GTP</name>
        <dbReference type="ChEBI" id="CHEBI:37565"/>
    </ligand>
</feature>
<comment type="function">
    <text evidence="1">Required for accurate and efficient protein synthesis under certain stress conditions. May act as a fidelity factor of the translation reaction, by catalyzing a one-codon backward translocation of tRNAs on improperly translocated ribosomes. Back-translocation proceeds from a post-translocation (POST) complex to a pre-translocation (PRE) complex, thus giving elongation factor G a second chance to translocate the tRNAs correctly. Binds to ribosomes in a GTP-dependent manner.</text>
</comment>
<comment type="catalytic activity">
    <reaction evidence="1">
        <text>GTP + H2O = GDP + phosphate + H(+)</text>
        <dbReference type="Rhea" id="RHEA:19669"/>
        <dbReference type="ChEBI" id="CHEBI:15377"/>
        <dbReference type="ChEBI" id="CHEBI:15378"/>
        <dbReference type="ChEBI" id="CHEBI:37565"/>
        <dbReference type="ChEBI" id="CHEBI:43474"/>
        <dbReference type="ChEBI" id="CHEBI:58189"/>
        <dbReference type="EC" id="3.6.5.n1"/>
    </reaction>
</comment>
<comment type="subcellular location">
    <subcellularLocation>
        <location evidence="1">Cell inner membrane</location>
        <topology evidence="1">Peripheral membrane protein</topology>
        <orientation evidence="1">Cytoplasmic side</orientation>
    </subcellularLocation>
</comment>
<comment type="similarity">
    <text evidence="1">Belongs to the TRAFAC class translation factor GTPase superfamily. Classic translation factor GTPase family. LepA subfamily.</text>
</comment>